<organism>
    <name type="scientific">Coxiella burnetii (strain CbuG_Q212)</name>
    <name type="common">Coxiella burnetii (strain Q212)</name>
    <dbReference type="NCBI Taxonomy" id="434923"/>
    <lineage>
        <taxon>Bacteria</taxon>
        <taxon>Pseudomonadati</taxon>
        <taxon>Pseudomonadota</taxon>
        <taxon>Gammaproteobacteria</taxon>
        <taxon>Legionellales</taxon>
        <taxon>Coxiellaceae</taxon>
        <taxon>Coxiella</taxon>
    </lineage>
</organism>
<reference key="1">
    <citation type="journal article" date="2009" name="Infect. Immun.">
        <title>Comparative genomics reveal extensive transposon-mediated genomic plasticity and diversity among potential effector proteins within the genus Coxiella.</title>
        <authorList>
            <person name="Beare P.A."/>
            <person name="Unsworth N."/>
            <person name="Andoh M."/>
            <person name="Voth D.E."/>
            <person name="Omsland A."/>
            <person name="Gilk S.D."/>
            <person name="Williams K.P."/>
            <person name="Sobral B.W."/>
            <person name="Kupko J.J. III"/>
            <person name="Porcella S.F."/>
            <person name="Samuel J.E."/>
            <person name="Heinzen R.A."/>
        </authorList>
    </citation>
    <scope>NUCLEOTIDE SEQUENCE [LARGE SCALE GENOMIC DNA]</scope>
    <source>
        <strain>CbuG_Q212</strain>
    </source>
</reference>
<feature type="chain" id="PRO_1000121207" description="DNA-directed RNA polymerase subunit omega">
    <location>
        <begin position="1"/>
        <end position="97"/>
    </location>
</feature>
<gene>
    <name evidence="1" type="primary">rpoZ</name>
    <name type="ordered locus">CbuG_1703</name>
</gene>
<accession>B6J202</accession>
<protein>
    <recommendedName>
        <fullName evidence="1">DNA-directed RNA polymerase subunit omega</fullName>
        <shortName evidence="1">RNAP omega subunit</shortName>
        <ecNumber evidence="1">2.7.7.6</ecNumber>
    </recommendedName>
    <alternativeName>
        <fullName evidence="1">RNA polymerase omega subunit</fullName>
    </alternativeName>
    <alternativeName>
        <fullName evidence="1">Transcriptase subunit omega</fullName>
    </alternativeName>
</protein>
<dbReference type="EC" id="2.7.7.6" evidence="1"/>
<dbReference type="EMBL" id="CP001019">
    <property type="protein sequence ID" value="ACJ18980.1"/>
    <property type="molecule type" value="Genomic_DNA"/>
</dbReference>
<dbReference type="RefSeq" id="WP_005771414.1">
    <property type="nucleotide sequence ID" value="NC_011527.1"/>
</dbReference>
<dbReference type="SMR" id="B6J202"/>
<dbReference type="KEGG" id="cbg:CbuG_1703"/>
<dbReference type="HOGENOM" id="CLU_125406_5_1_6"/>
<dbReference type="GO" id="GO:0000428">
    <property type="term" value="C:DNA-directed RNA polymerase complex"/>
    <property type="evidence" value="ECO:0007669"/>
    <property type="project" value="UniProtKB-KW"/>
</dbReference>
<dbReference type="GO" id="GO:0003677">
    <property type="term" value="F:DNA binding"/>
    <property type="evidence" value="ECO:0007669"/>
    <property type="project" value="UniProtKB-UniRule"/>
</dbReference>
<dbReference type="GO" id="GO:0003899">
    <property type="term" value="F:DNA-directed RNA polymerase activity"/>
    <property type="evidence" value="ECO:0007669"/>
    <property type="project" value="UniProtKB-UniRule"/>
</dbReference>
<dbReference type="GO" id="GO:0006351">
    <property type="term" value="P:DNA-templated transcription"/>
    <property type="evidence" value="ECO:0007669"/>
    <property type="project" value="UniProtKB-UniRule"/>
</dbReference>
<dbReference type="Gene3D" id="3.90.940.10">
    <property type="match status" value="1"/>
</dbReference>
<dbReference type="HAMAP" id="MF_00366">
    <property type="entry name" value="RNApol_bact_RpoZ"/>
    <property type="match status" value="1"/>
</dbReference>
<dbReference type="InterPro" id="IPR003716">
    <property type="entry name" value="DNA-dir_RNA_pol_omega"/>
</dbReference>
<dbReference type="InterPro" id="IPR006110">
    <property type="entry name" value="Pol_omega/Rpo6/RPB6"/>
</dbReference>
<dbReference type="InterPro" id="IPR036161">
    <property type="entry name" value="RPB6/omega-like_sf"/>
</dbReference>
<dbReference type="NCBIfam" id="TIGR00690">
    <property type="entry name" value="rpoZ"/>
    <property type="match status" value="1"/>
</dbReference>
<dbReference type="PANTHER" id="PTHR34476">
    <property type="entry name" value="DNA-DIRECTED RNA POLYMERASE SUBUNIT OMEGA"/>
    <property type="match status" value="1"/>
</dbReference>
<dbReference type="PANTHER" id="PTHR34476:SF1">
    <property type="entry name" value="DNA-DIRECTED RNA POLYMERASE SUBUNIT OMEGA"/>
    <property type="match status" value="1"/>
</dbReference>
<dbReference type="Pfam" id="PF01192">
    <property type="entry name" value="RNA_pol_Rpb6"/>
    <property type="match status" value="1"/>
</dbReference>
<dbReference type="SMART" id="SM01409">
    <property type="entry name" value="RNA_pol_Rpb6"/>
    <property type="match status" value="1"/>
</dbReference>
<dbReference type="SUPFAM" id="SSF63562">
    <property type="entry name" value="RPB6/omega subunit-like"/>
    <property type="match status" value="1"/>
</dbReference>
<evidence type="ECO:0000255" key="1">
    <source>
        <dbReference type="HAMAP-Rule" id="MF_00366"/>
    </source>
</evidence>
<name>RPOZ_COXB2</name>
<sequence length="97" mass="10759">MARVTVEDCLEHVENRFDLVLKAAKRAHILELGGAEPMVPRDNDKPAVLALREIAAGYDVTREGQEQETEEVDVDRNVLAETAKMNKAVASQKESEV</sequence>
<keyword id="KW-0240">DNA-directed RNA polymerase</keyword>
<keyword id="KW-0548">Nucleotidyltransferase</keyword>
<keyword id="KW-0804">Transcription</keyword>
<keyword id="KW-0808">Transferase</keyword>
<proteinExistence type="inferred from homology"/>
<comment type="function">
    <text evidence="1">Promotes RNA polymerase assembly. Latches the N- and C-terminal regions of the beta' subunit thereby facilitating its interaction with the beta and alpha subunits.</text>
</comment>
<comment type="catalytic activity">
    <reaction evidence="1">
        <text>RNA(n) + a ribonucleoside 5'-triphosphate = RNA(n+1) + diphosphate</text>
        <dbReference type="Rhea" id="RHEA:21248"/>
        <dbReference type="Rhea" id="RHEA-COMP:14527"/>
        <dbReference type="Rhea" id="RHEA-COMP:17342"/>
        <dbReference type="ChEBI" id="CHEBI:33019"/>
        <dbReference type="ChEBI" id="CHEBI:61557"/>
        <dbReference type="ChEBI" id="CHEBI:140395"/>
        <dbReference type="EC" id="2.7.7.6"/>
    </reaction>
</comment>
<comment type="subunit">
    <text evidence="1">The RNAP catalytic core consists of 2 alpha, 1 beta, 1 beta' and 1 omega subunit. When a sigma factor is associated with the core the holoenzyme is formed, which can initiate transcription.</text>
</comment>
<comment type="similarity">
    <text evidence="1">Belongs to the RNA polymerase subunit omega family.</text>
</comment>